<protein>
    <recommendedName>
        <fullName>Autophagy-related protein 37</fullName>
    </recommendedName>
</protein>
<keyword id="KW-0072">Autophagy</keyword>
<keyword id="KW-0446">Lipid-binding</keyword>
<keyword id="KW-0472">Membrane</keyword>
<keyword id="KW-0576">Peroxisome</keyword>
<keyword id="KW-0597">Phosphoprotein</keyword>
<keyword id="KW-0653">Protein transport</keyword>
<keyword id="KW-1185">Reference proteome</keyword>
<keyword id="KW-0812">Transmembrane</keyword>
<keyword id="KW-1133">Transmembrane helix</keyword>
<keyword id="KW-0813">Transport</keyword>
<name>ATG37_KOMPG</name>
<evidence type="ECO:0000255" key="1"/>
<evidence type="ECO:0000255" key="2">
    <source>
        <dbReference type="PROSITE-ProRule" id="PRU00573"/>
    </source>
</evidence>
<evidence type="ECO:0000269" key="3">
    <source>
    </source>
</evidence>
<evidence type="ECO:0000305" key="4"/>
<feature type="chain" id="PRO_0000430145" description="Autophagy-related protein 37">
    <location>
        <begin position="1"/>
        <end position="409"/>
    </location>
</feature>
<feature type="topological domain" description="Cytoplasmic" evidence="1">
    <location>
        <begin position="1"/>
        <end position="313"/>
    </location>
</feature>
<feature type="transmembrane region" description="Helical" evidence="1">
    <location>
        <begin position="314"/>
        <end position="334"/>
    </location>
</feature>
<feature type="topological domain" description="Peroxisomal" evidence="1">
    <location>
        <begin position="335"/>
        <end position="409"/>
    </location>
</feature>
<feature type="domain" description="ACB" evidence="2">
    <location>
        <begin position="5"/>
        <end position="103"/>
    </location>
</feature>
<comment type="function">
    <text evidence="3">Acyl-CoA binding protein which acts as the peroxisome receptor for pexophagy. Required for both micropexophagy and macropexophagy, but not for the cytoplasm to vacuole transport (Cvt) or autophagy pathways. Required for functional micropexophagic apparatus (MIPA) and relocation of ATG11 to the peroxisome-sequestering arms of the vacuole. Binds palmitoyl-CoA but not oleyl-CoA.</text>
</comment>
<comment type="subunit">
    <text evidence="3">Interacts with ATG30 and PEX3.</text>
</comment>
<comment type="subcellular location">
    <subcellularLocation>
        <location evidence="3">Peroxisome membrane</location>
        <topology evidence="3">Single-pass membrane protein</topology>
    </subcellularLocation>
    <text>Localization to the peroxisome is ATG30-dependent.</text>
</comment>
<comment type="induction">
    <text evidence="3">Repressed in glucose and ethanol media, but induced under peroxisome proliferation conditions in methanol and oleate media.</text>
</comment>
<comment type="PTM">
    <text evidence="3">Phosphorylated.</text>
</comment>
<comment type="similarity">
    <text evidence="4">Belongs to the ATG37 family.</text>
</comment>
<gene>
    <name type="ordered locus">PAS_chr4_0602</name>
</gene>
<organism>
    <name type="scientific">Komagataella phaffii (strain GS115 / ATCC 20864)</name>
    <name type="common">Yeast</name>
    <name type="synonym">Pichia pastoris</name>
    <dbReference type="NCBI Taxonomy" id="644223"/>
    <lineage>
        <taxon>Eukaryota</taxon>
        <taxon>Fungi</taxon>
        <taxon>Dikarya</taxon>
        <taxon>Ascomycota</taxon>
        <taxon>Saccharomycotina</taxon>
        <taxon>Pichiomycetes</taxon>
        <taxon>Pichiales</taxon>
        <taxon>Pichiaceae</taxon>
        <taxon>Komagataella</taxon>
    </lineage>
</organism>
<accession>C4R8D7</accession>
<reference key="1">
    <citation type="journal article" date="2009" name="Nat. Biotechnol.">
        <title>Genome sequence of the recombinant protein production host Pichia pastoris.</title>
        <authorList>
            <person name="De Schutter K."/>
            <person name="Lin Y.-C."/>
            <person name="Tiels P."/>
            <person name="Van Hecke A."/>
            <person name="Glinka S."/>
            <person name="Weber-Lehmann J."/>
            <person name="Rouze P."/>
            <person name="Van de Peer Y."/>
            <person name="Callewaert N."/>
        </authorList>
    </citation>
    <scope>NUCLEOTIDE SEQUENCE [LARGE SCALE GENOMIC DNA]</scope>
    <source>
        <strain>GS115 / ATCC 20864</strain>
    </source>
</reference>
<reference key="2">
    <citation type="journal article" date="2014" name="J. Cell Biol.">
        <title>Peroxisomal Atg37 binds Atg30 or palmitoyl-CoA to regulate phagophore formation during pexophagy.</title>
        <authorList>
            <person name="Nazarko T.Y."/>
            <person name="Ozeki K."/>
            <person name="Till A."/>
            <person name="Ramakrishnan G."/>
            <person name="Lotfi P."/>
            <person name="Yan M."/>
            <person name="Subramani S."/>
        </authorList>
    </citation>
    <scope>INDUCTION</scope>
    <scope>SUBCELLULAR LOCATION</scope>
    <scope>TOPOLOGY</scope>
    <scope>INTERACTION WITH ATG30 AND PEX3</scope>
    <scope>BINDING TO PALMITOYL-COA</scope>
    <scope>PHOSPHORYLATION</scope>
    <scope>FUNCTION</scope>
</reference>
<dbReference type="EMBL" id="FN392322">
    <property type="protein sequence ID" value="CAY71862.1"/>
    <property type="molecule type" value="Genomic_DNA"/>
</dbReference>
<dbReference type="RefSeq" id="XP_002494041.1">
    <property type="nucleotide sequence ID" value="XM_002493996.1"/>
</dbReference>
<dbReference type="SMR" id="C4R8D7"/>
<dbReference type="STRING" id="644223.C4R8D7"/>
<dbReference type="EnsemblFungi" id="CAY71862">
    <property type="protein sequence ID" value="CAY71862"/>
    <property type="gene ID" value="PAS_chr4_0602"/>
</dbReference>
<dbReference type="GeneID" id="8200867"/>
<dbReference type="KEGG" id="ppa:PAS_chr4_0602"/>
<dbReference type="eggNOG" id="KOG0817">
    <property type="taxonomic scope" value="Eukaryota"/>
</dbReference>
<dbReference type="HOGENOM" id="CLU_756699_0_0_1"/>
<dbReference type="InParanoid" id="C4R8D7"/>
<dbReference type="OrthoDB" id="346910at2759"/>
<dbReference type="Proteomes" id="UP000000314">
    <property type="component" value="Chromosome 4"/>
</dbReference>
<dbReference type="GO" id="GO:0016020">
    <property type="term" value="C:membrane"/>
    <property type="evidence" value="ECO:0000314"/>
    <property type="project" value="UniProtKB"/>
</dbReference>
<dbReference type="GO" id="GO:0005778">
    <property type="term" value="C:peroxisomal membrane"/>
    <property type="evidence" value="ECO:0007669"/>
    <property type="project" value="UniProtKB-SubCell"/>
</dbReference>
<dbReference type="GO" id="GO:0005777">
    <property type="term" value="C:peroxisome"/>
    <property type="evidence" value="ECO:0000314"/>
    <property type="project" value="UniProtKB"/>
</dbReference>
<dbReference type="GO" id="GO:0000062">
    <property type="term" value="F:fatty-acyl-CoA binding"/>
    <property type="evidence" value="ECO:0000314"/>
    <property type="project" value="UniProtKB"/>
</dbReference>
<dbReference type="GO" id="GO:0006631">
    <property type="term" value="P:fatty acid metabolic process"/>
    <property type="evidence" value="ECO:0007669"/>
    <property type="project" value="TreeGrafter"/>
</dbReference>
<dbReference type="GO" id="GO:0000425">
    <property type="term" value="P:pexophagy"/>
    <property type="evidence" value="ECO:0000315"/>
    <property type="project" value="UniProtKB"/>
</dbReference>
<dbReference type="GO" id="GO:0015031">
    <property type="term" value="P:protein transport"/>
    <property type="evidence" value="ECO:0007669"/>
    <property type="project" value="UniProtKB-KW"/>
</dbReference>
<dbReference type="Gene3D" id="1.20.80.10">
    <property type="match status" value="1"/>
</dbReference>
<dbReference type="InterPro" id="IPR000582">
    <property type="entry name" value="Acyl-CoA-binding_protein"/>
</dbReference>
<dbReference type="InterPro" id="IPR035984">
    <property type="entry name" value="Acyl-CoA-binding_sf"/>
</dbReference>
<dbReference type="InterPro" id="IPR014352">
    <property type="entry name" value="FERM/acyl-CoA-bd_prot_sf"/>
</dbReference>
<dbReference type="PANTHER" id="PTHR23310">
    <property type="entry name" value="ACYL-COA-BINDING PROTEIN, ACBP"/>
    <property type="match status" value="1"/>
</dbReference>
<dbReference type="PANTHER" id="PTHR23310:SF133">
    <property type="entry name" value="COA BINDING PROTEIN, PUTATIVE (AFU_ORTHOLOGUE AFUA_1G12300)-RELATED"/>
    <property type="match status" value="1"/>
</dbReference>
<dbReference type="Pfam" id="PF00887">
    <property type="entry name" value="ACBP"/>
    <property type="match status" value="1"/>
</dbReference>
<dbReference type="SUPFAM" id="SSF47027">
    <property type="entry name" value="Acyl-CoA binding protein"/>
    <property type="match status" value="1"/>
</dbReference>
<dbReference type="PROSITE" id="PS51228">
    <property type="entry name" value="ACB_2"/>
    <property type="match status" value="1"/>
</dbReference>
<proteinExistence type="evidence at protein level"/>
<sequence>MSESIDRVFVKAIGTIRTLSSRTGYGGLPRPPIENRVKLYGLYKQATEGDVAGVMERPLGDSPEAEAAKRKWDAWRSEQGTSKTEAKRQYISYLIDTMKQFASDTTEARELLSELEYLWNQISDVSPNDSSDSESNAGPAQLLQNHAQLLSRDISVVDDPITSSGMDPMYNPSFQRHNSSRFINASTAERLNSLSNYYSNLNPTPPLSSRRYQGSVTPRNVDFIKWQNDINNSINKLNHDLQLLANRRLQSSASDPLYSKRGSDLTHDDFVNDISSSSSNRRFRARRNQPLVSKVLLGTISLLLKLIKTVIKHVAIDAVIIAVLVAVIKRSIIIPNLISNEISLQKIHHSELESNSSIKGDSNGGRLTIVLPFINGKDFFQENSLLGKLLKVFHDYVDHVSRIRLIKRN</sequence>